<dbReference type="EMBL" id="AF078544">
    <property type="protein sequence ID" value="AAD04346.1"/>
    <property type="molecule type" value="mRNA"/>
</dbReference>
<dbReference type="EMBL" id="AF155809">
    <property type="protein sequence ID" value="AAG29582.1"/>
    <property type="molecule type" value="mRNA"/>
</dbReference>
<dbReference type="EMBL" id="AF155810">
    <property type="protein sequence ID" value="AAG29583.1"/>
    <property type="molecule type" value="mRNA"/>
</dbReference>
<dbReference type="EMBL" id="AF155811">
    <property type="protein sequence ID" value="AAG29584.1"/>
    <property type="molecule type" value="mRNA"/>
</dbReference>
<dbReference type="EMBL" id="AY358099">
    <property type="protein sequence ID" value="AAQ88466.1"/>
    <property type="molecule type" value="mRNA"/>
</dbReference>
<dbReference type="EMBL" id="AL035423">
    <property type="status" value="NOT_ANNOTATED_CDS"/>
    <property type="molecule type" value="Genomic_DNA"/>
</dbReference>
<dbReference type="EMBL" id="CH471107">
    <property type="protein sequence ID" value="EAX11804.1"/>
    <property type="molecule type" value="Genomic_DNA"/>
</dbReference>
<dbReference type="EMBL" id="BC119666">
    <property type="protein sequence ID" value="AAI19667.1"/>
    <property type="molecule type" value="mRNA"/>
</dbReference>
<dbReference type="EMBL" id="BC119667">
    <property type="protein sequence ID" value="AAI19668.1"/>
    <property type="molecule type" value="mRNA"/>
</dbReference>
<dbReference type="CCDS" id="CCDS14623.1">
    <molecule id="O95258-1"/>
</dbReference>
<dbReference type="CCDS" id="CCDS14624.1">
    <molecule id="O95258-2"/>
</dbReference>
<dbReference type="CCDS" id="CCDS76020.1">
    <molecule id="O95258-3"/>
</dbReference>
<dbReference type="RefSeq" id="NP_001269124.1">
    <molecule id="O95258-1"/>
    <property type="nucleotide sequence ID" value="NM_001282195.2"/>
</dbReference>
<dbReference type="RefSeq" id="NP_001269125.1">
    <molecule id="O95258-2"/>
    <property type="nucleotide sequence ID" value="NM_001282196.2"/>
</dbReference>
<dbReference type="RefSeq" id="NP_001269126.1">
    <molecule id="O95258-3"/>
    <property type="nucleotide sequence ID" value="NM_001282197.2"/>
</dbReference>
<dbReference type="RefSeq" id="NP_001269127.1">
    <property type="nucleotide sequence ID" value="NM_001282198.1"/>
</dbReference>
<dbReference type="SMR" id="O95258"/>
<dbReference type="BioGRID" id="114485">
    <property type="interactions" value="30"/>
</dbReference>
<dbReference type="FunCoup" id="O95258">
    <property type="interactions" value="1102"/>
</dbReference>
<dbReference type="IntAct" id="O95258">
    <property type="interactions" value="29"/>
</dbReference>
<dbReference type="STRING" id="9606.ENSP00000477981"/>
<dbReference type="TCDB" id="2.A.29.24.1">
    <property type="family name" value="the mitochondrial carrier (mc) family"/>
</dbReference>
<dbReference type="iPTMnet" id="O95258"/>
<dbReference type="PhosphoSitePlus" id="O95258"/>
<dbReference type="BioMuta" id="SLC25A14"/>
<dbReference type="jPOST" id="O95258"/>
<dbReference type="MassIVE" id="O95258"/>
<dbReference type="PaxDb" id="9606-ENSP00000477981"/>
<dbReference type="PeptideAtlas" id="O95258"/>
<dbReference type="ProteomicsDB" id="50752">
    <molecule id="O95258-1"/>
</dbReference>
<dbReference type="ProteomicsDB" id="50753">
    <molecule id="O95258-2"/>
</dbReference>
<dbReference type="ProteomicsDB" id="50754">
    <molecule id="O95258-3"/>
</dbReference>
<dbReference type="Pumba" id="O95258"/>
<dbReference type="Antibodypedia" id="16263">
    <property type="antibodies" value="90 antibodies from 26 providers"/>
</dbReference>
<dbReference type="DNASU" id="9016"/>
<dbReference type="Ensembl" id="ENST00000218197.9">
    <molecule id="O95258-1"/>
    <property type="protein sequence ID" value="ENSP00000218197.5"/>
    <property type="gene ID" value="ENSG00000102078.16"/>
</dbReference>
<dbReference type="Ensembl" id="ENST00000339231.3">
    <molecule id="O95258-3"/>
    <property type="protein sequence ID" value="ENSP00000342797.3"/>
    <property type="gene ID" value="ENSG00000102078.16"/>
</dbReference>
<dbReference type="Ensembl" id="ENST00000361980.9">
    <molecule id="O95258-2"/>
    <property type="protein sequence ID" value="ENSP00000354455.5"/>
    <property type="gene ID" value="ENSG00000102078.16"/>
</dbReference>
<dbReference type="Ensembl" id="ENST00000545805.6">
    <molecule id="O95258-1"/>
    <property type="protein sequence ID" value="ENSP00000444642.2"/>
    <property type="gene ID" value="ENSG00000102078.16"/>
</dbReference>
<dbReference type="Ensembl" id="ENST00000612248.4">
    <molecule id="O95258-3"/>
    <property type="protein sequence ID" value="ENSP00000477981.1"/>
    <property type="gene ID" value="ENSG00000102078.16"/>
</dbReference>
<dbReference type="GeneID" id="9016"/>
<dbReference type="KEGG" id="hsa:9016"/>
<dbReference type="MANE-Select" id="ENST00000545805.6">
    <property type="protein sequence ID" value="ENSP00000444642.2"/>
    <property type="RefSeq nucleotide sequence ID" value="NM_001282195.2"/>
    <property type="RefSeq protein sequence ID" value="NP_001269124.1"/>
</dbReference>
<dbReference type="UCSC" id="uc004evp.3">
    <molecule id="O95258-1"/>
    <property type="organism name" value="human"/>
</dbReference>
<dbReference type="AGR" id="HGNC:10984"/>
<dbReference type="CTD" id="9016"/>
<dbReference type="DisGeNET" id="9016"/>
<dbReference type="GeneCards" id="SLC25A14"/>
<dbReference type="HGNC" id="HGNC:10984">
    <property type="gene designation" value="SLC25A14"/>
</dbReference>
<dbReference type="HPA" id="ENSG00000102078">
    <property type="expression patterns" value="Low tissue specificity"/>
</dbReference>
<dbReference type="MIM" id="300242">
    <property type="type" value="gene"/>
</dbReference>
<dbReference type="neXtProt" id="NX_O95258"/>
<dbReference type="OpenTargets" id="ENSG00000102078"/>
<dbReference type="PharmGKB" id="PA35860"/>
<dbReference type="VEuPathDB" id="HostDB:ENSG00000102078"/>
<dbReference type="eggNOG" id="KOG0753">
    <property type="taxonomic scope" value="Eukaryota"/>
</dbReference>
<dbReference type="GeneTree" id="ENSGT00940000159471"/>
<dbReference type="InParanoid" id="O95258"/>
<dbReference type="OMA" id="VWSNIIC"/>
<dbReference type="OrthoDB" id="756301at2759"/>
<dbReference type="PAN-GO" id="O95258">
    <property type="GO annotations" value="12 GO annotations based on evolutionary models"/>
</dbReference>
<dbReference type="PhylomeDB" id="O95258"/>
<dbReference type="TreeFam" id="TF323211"/>
<dbReference type="PathwayCommons" id="O95258"/>
<dbReference type="Reactome" id="R-HSA-167826">
    <property type="pathway name" value="The fatty acid cycling model"/>
</dbReference>
<dbReference type="SignaLink" id="O95258"/>
<dbReference type="BioGRID-ORCS" id="9016">
    <property type="hits" value="8 hits in 777 CRISPR screens"/>
</dbReference>
<dbReference type="ChiTaRS" id="SLC25A14">
    <property type="organism name" value="human"/>
</dbReference>
<dbReference type="GeneWiki" id="SLC25A14"/>
<dbReference type="GenomeRNAi" id="9016"/>
<dbReference type="Pharos" id="O95258">
    <property type="development level" value="Tbio"/>
</dbReference>
<dbReference type="PRO" id="PR:O95258"/>
<dbReference type="Proteomes" id="UP000005640">
    <property type="component" value="Chromosome X"/>
</dbReference>
<dbReference type="RNAct" id="O95258">
    <property type="molecule type" value="protein"/>
</dbReference>
<dbReference type="Bgee" id="ENSG00000102078">
    <property type="expression patterns" value="Expressed in secondary oocyte and 192 other cell types or tissues"/>
</dbReference>
<dbReference type="ExpressionAtlas" id="O95258">
    <property type="expression patterns" value="baseline and differential"/>
</dbReference>
<dbReference type="GO" id="GO:0005743">
    <property type="term" value="C:mitochondrial inner membrane"/>
    <property type="evidence" value="ECO:0000304"/>
    <property type="project" value="Reactome"/>
</dbReference>
<dbReference type="GO" id="GO:0005739">
    <property type="term" value="C:mitochondrion"/>
    <property type="evidence" value="ECO:0000314"/>
    <property type="project" value="UniProtKB"/>
</dbReference>
<dbReference type="GO" id="GO:0005886">
    <property type="term" value="C:plasma membrane"/>
    <property type="evidence" value="ECO:0000304"/>
    <property type="project" value="ProtInc"/>
</dbReference>
<dbReference type="GO" id="GO:0015108">
    <property type="term" value="F:chloride transmembrane transporter activity"/>
    <property type="evidence" value="ECO:0000314"/>
    <property type="project" value="UniProtKB"/>
</dbReference>
<dbReference type="GO" id="GO:0042803">
    <property type="term" value="F:protein homodimerization activity"/>
    <property type="evidence" value="ECO:0000314"/>
    <property type="project" value="UniProtKB"/>
</dbReference>
<dbReference type="GO" id="GO:0015078">
    <property type="term" value="F:proton transmembrane transporter activity"/>
    <property type="evidence" value="ECO:0000314"/>
    <property type="project" value="UniProtKB"/>
</dbReference>
<dbReference type="GO" id="GO:0005452">
    <property type="term" value="F:solute:inorganic anion antiporter activity"/>
    <property type="evidence" value="ECO:0000314"/>
    <property type="project" value="UniProtKB"/>
</dbReference>
<dbReference type="GO" id="GO:0022857">
    <property type="term" value="F:transmembrane transporter activity"/>
    <property type="evidence" value="ECO:0000318"/>
    <property type="project" value="GO_Central"/>
</dbReference>
<dbReference type="GO" id="GO:0009060">
    <property type="term" value="P:aerobic respiration"/>
    <property type="evidence" value="ECO:0000304"/>
    <property type="project" value="ProtInc"/>
</dbReference>
<dbReference type="GO" id="GO:0015698">
    <property type="term" value="P:inorganic anion transport"/>
    <property type="evidence" value="ECO:0000314"/>
    <property type="project" value="UniProtKB"/>
</dbReference>
<dbReference type="GO" id="GO:1900407">
    <property type="term" value="P:regulation of cellular response to oxidative stress"/>
    <property type="evidence" value="ECO:0000314"/>
    <property type="project" value="UniProtKB"/>
</dbReference>
<dbReference type="FunFam" id="1.50.40.10:FF:000006">
    <property type="entry name" value="brain mitochondrial carrier protein 1 isoform X1"/>
    <property type="match status" value="1"/>
</dbReference>
<dbReference type="Gene3D" id="1.50.40.10">
    <property type="entry name" value="Mitochondrial carrier domain"/>
    <property type="match status" value="1"/>
</dbReference>
<dbReference type="InterPro" id="IPR002067">
    <property type="entry name" value="Mit_carrier"/>
</dbReference>
<dbReference type="InterPro" id="IPR050391">
    <property type="entry name" value="Mito_Metabolite_Transporter"/>
</dbReference>
<dbReference type="InterPro" id="IPR018108">
    <property type="entry name" value="Mitochondrial_sb/sol_carrier"/>
</dbReference>
<dbReference type="InterPro" id="IPR023395">
    <property type="entry name" value="Mt_carrier_dom_sf"/>
</dbReference>
<dbReference type="PANTHER" id="PTHR45618">
    <property type="entry name" value="MITOCHONDRIAL DICARBOXYLATE CARRIER-RELATED"/>
    <property type="match status" value="1"/>
</dbReference>
<dbReference type="Pfam" id="PF00153">
    <property type="entry name" value="Mito_carr"/>
    <property type="match status" value="3"/>
</dbReference>
<dbReference type="PRINTS" id="PR00784">
    <property type="entry name" value="MTUNCOUPLING"/>
</dbReference>
<dbReference type="SUPFAM" id="SSF103506">
    <property type="entry name" value="Mitochondrial carrier"/>
    <property type="match status" value="1"/>
</dbReference>
<dbReference type="PROSITE" id="PS50920">
    <property type="entry name" value="SOLCAR"/>
    <property type="match status" value="3"/>
</dbReference>
<proteinExistence type="evidence at protein level"/>
<evidence type="ECO:0000250" key="1">
    <source>
        <dbReference type="UniProtKB" id="Q9Z2B2"/>
    </source>
</evidence>
<evidence type="ECO:0000255" key="2"/>
<evidence type="ECO:0000269" key="3">
    <source>
    </source>
</evidence>
<evidence type="ECO:0000269" key="4">
    <source>
    </source>
</evidence>
<evidence type="ECO:0000269" key="5">
    <source>
    </source>
</evidence>
<evidence type="ECO:0000269" key="6">
    <source>
    </source>
</evidence>
<evidence type="ECO:0000269" key="7">
    <source>
    </source>
</evidence>
<evidence type="ECO:0000303" key="8">
    <source>
    </source>
</evidence>
<evidence type="ECO:0000303" key="9">
    <source>
    </source>
</evidence>
<evidence type="ECO:0000305" key="10"/>
<evidence type="ECO:0000305" key="11">
    <source>
    </source>
</evidence>
<evidence type="ECO:0000305" key="12">
    <source>
    </source>
</evidence>
<evidence type="ECO:0000312" key="13">
    <source>
        <dbReference type="HGNC" id="HGNC:10984"/>
    </source>
</evidence>
<name>UCP5_HUMAN</name>
<keyword id="KW-0025">Alternative splicing</keyword>
<keyword id="KW-0472">Membrane</keyword>
<keyword id="KW-0496">Mitochondrion</keyword>
<keyword id="KW-0999">Mitochondrion inner membrane</keyword>
<keyword id="KW-1267">Proteomics identification</keyword>
<keyword id="KW-1185">Reference proteome</keyword>
<keyword id="KW-0677">Repeat</keyword>
<keyword id="KW-0812">Transmembrane</keyword>
<keyword id="KW-1133">Transmembrane helix</keyword>
<keyword id="KW-0813">Transport</keyword>
<protein>
    <recommendedName>
        <fullName evidence="9">Brain mitochondrial carrier protein 1</fullName>
        <shortName>BMCP-1</shortName>
    </recommendedName>
    <alternativeName>
        <fullName>Mitochondrial uncoupling protein 5</fullName>
        <shortName>UCP 5</shortName>
    </alternativeName>
    <alternativeName>
        <fullName>Solute carrier family 25 member 14</fullName>
    </alternativeName>
</protein>
<comment type="function">
    <text evidence="1 4 5 7 12">Transports inorganic anions (sulfate, sulfite, thiosulfate and phosphate) and, to a lesser extent, a variety of dicarboxylates (e.g. malonate, malate and citramalate) and, even more so, aspartate and glutamate and tricarboxylates (PubMed:31356773). May catalyze the export of sulfite and thiosulfate (the hydrogen sulfide degradation products) from the mitochondria, thereby modulating the level of the hydrogen sulfide (Probable). Also can mediate a very low unidirectional transport of anions including sulfate, phosphate, (S)-malate, citrate, L-aspartate and L-glutamate (PubMed:31356773). Maintains oxidative balance (through uncoupling activities) and ATP production (by modifying mitochondrial membrane potential) (PubMed:20600837). Is able to transport protons across lipid membranes (PubMed:22524567, PubMed:26182433). Also exhibits transmembrane chloride transport activity to a lesser extent (PubMed:22524567, PubMed:26182433). May modify mitochondrial respiratory efficiency and mitochondrial oxidant production (By similarity).</text>
</comment>
<comment type="catalytic activity">
    <reaction evidence="7">
        <text>sulfite(in) + sulfate(out) = sulfite(out) + sulfate(in)</text>
        <dbReference type="Rhea" id="RHEA:73207"/>
        <dbReference type="ChEBI" id="CHEBI:16189"/>
        <dbReference type="ChEBI" id="CHEBI:17359"/>
    </reaction>
</comment>
<comment type="catalytic activity">
    <reaction evidence="7">
        <text>thiosulfate(in) + sulfate(out) = thiosulfate(out) + sulfate(in)</text>
        <dbReference type="Rhea" id="RHEA:73215"/>
        <dbReference type="ChEBI" id="CHEBI:16189"/>
        <dbReference type="ChEBI" id="CHEBI:33542"/>
    </reaction>
</comment>
<comment type="catalytic activity">
    <reaction evidence="7">
        <text>sulfate(out) + phosphate(in) = sulfate(in) + phosphate(out)</text>
        <dbReference type="Rhea" id="RHEA:71631"/>
        <dbReference type="ChEBI" id="CHEBI:16189"/>
        <dbReference type="ChEBI" id="CHEBI:43474"/>
    </reaction>
</comment>
<comment type="catalytic activity">
    <reaction evidence="7">
        <text>oxalate(in) + sulfate(out) = oxalate(out) + sulfate(in)</text>
        <dbReference type="Rhea" id="RHEA:72275"/>
        <dbReference type="ChEBI" id="CHEBI:16189"/>
        <dbReference type="ChEBI" id="CHEBI:30623"/>
    </reaction>
</comment>
<comment type="catalytic activity">
    <reaction evidence="7">
        <text>malonate(in) + sulfate(out) = malonate(out) + sulfate(in)</text>
        <dbReference type="Rhea" id="RHEA:73195"/>
        <dbReference type="ChEBI" id="CHEBI:15792"/>
        <dbReference type="ChEBI" id="CHEBI:16189"/>
    </reaction>
</comment>
<comment type="catalytic activity">
    <reaction evidence="7">
        <text>maleate(in) + sulfate(out) = maleate(out) + sulfate(in)</text>
        <dbReference type="Rhea" id="RHEA:73199"/>
        <dbReference type="ChEBI" id="CHEBI:16189"/>
        <dbReference type="ChEBI" id="CHEBI:30780"/>
    </reaction>
</comment>
<comment type="catalytic activity">
    <reaction evidence="7">
        <text>(S)-malate(in) + sulfate(out) = (S)-malate(out) + sulfate(in)</text>
        <dbReference type="Rhea" id="RHEA:71615"/>
        <dbReference type="ChEBI" id="CHEBI:15589"/>
        <dbReference type="ChEBI" id="CHEBI:16189"/>
    </reaction>
</comment>
<comment type="catalytic activity">
    <reaction evidence="7">
        <text>(3S)-citramalate(in) + sulfate(out) = (3S)-citramalate(out) + sulfate(in)</text>
        <dbReference type="Rhea" id="RHEA:73223"/>
        <dbReference type="ChEBI" id="CHEBI:16189"/>
        <dbReference type="ChEBI" id="CHEBI:30936"/>
    </reaction>
</comment>
<comment type="catalytic activity">
    <reaction evidence="7">
        <text>(3R)-citramalate(in) + sulfate(out) = (3R)-citramalate(out) + sulfate(in)</text>
        <dbReference type="Rhea" id="RHEA:73227"/>
        <dbReference type="ChEBI" id="CHEBI:16189"/>
        <dbReference type="ChEBI" id="CHEBI:30934"/>
    </reaction>
</comment>
<comment type="catalytic activity">
    <reaction evidence="7">
        <text>sulfate(out) + succinate(in) = sulfate(in) + succinate(out)</text>
        <dbReference type="Rhea" id="RHEA:73411"/>
        <dbReference type="ChEBI" id="CHEBI:16189"/>
        <dbReference type="ChEBI" id="CHEBI:30031"/>
    </reaction>
</comment>
<comment type="catalytic activity">
    <reaction evidence="7">
        <text>(S,S)-tartrate(in) + sulfate(out) = (S,S)-tartrate(out) + sulfate(in)</text>
        <dbReference type="Rhea" id="RHEA:73407"/>
        <dbReference type="ChEBI" id="CHEBI:16189"/>
        <dbReference type="ChEBI" id="CHEBI:30927"/>
    </reaction>
</comment>
<comment type="catalytic activity">
    <reaction evidence="7">
        <text>(2R,3R)-tartrate(in) + sulfate(out) = (2R,3R)-tartrate(out) + sulfate(in)</text>
        <dbReference type="Rhea" id="RHEA:73403"/>
        <dbReference type="ChEBI" id="CHEBI:16189"/>
        <dbReference type="ChEBI" id="CHEBI:30924"/>
    </reaction>
</comment>
<comment type="catalytic activity">
    <reaction evidence="7">
        <text>D-aspartate(in) + sulfate(out) = D-aspartate(out) + sulfate(in)</text>
        <dbReference type="Rhea" id="RHEA:73399"/>
        <dbReference type="ChEBI" id="CHEBI:16189"/>
        <dbReference type="ChEBI" id="CHEBI:29990"/>
    </reaction>
</comment>
<comment type="catalytic activity">
    <reaction evidence="7">
        <text>L-aspartate(in) + sulfate(out) = L-aspartate(out) + sulfate(in)</text>
        <dbReference type="Rhea" id="RHEA:73395"/>
        <dbReference type="ChEBI" id="CHEBI:16189"/>
        <dbReference type="ChEBI" id="CHEBI:29991"/>
    </reaction>
</comment>
<comment type="catalytic activity">
    <reaction evidence="7">
        <text>sulfate(in) = sulfate(out)</text>
        <dbReference type="Rhea" id="RHEA:34983"/>
        <dbReference type="ChEBI" id="CHEBI:16189"/>
    </reaction>
</comment>
<comment type="catalytic activity">
    <reaction evidence="7">
        <text>phosphate(in) = phosphate(out)</text>
        <dbReference type="Rhea" id="RHEA:32823"/>
        <dbReference type="ChEBI" id="CHEBI:43474"/>
    </reaction>
</comment>
<comment type="catalytic activity">
    <reaction evidence="7">
        <text>(S)-malate(out) = (S)-malate(in)</text>
        <dbReference type="Rhea" id="RHEA:74555"/>
        <dbReference type="ChEBI" id="CHEBI:15589"/>
    </reaction>
</comment>
<comment type="catalytic activity">
    <reaction evidence="7">
        <text>citrate(in) = citrate(out)</text>
        <dbReference type="Rhea" id="RHEA:33183"/>
        <dbReference type="ChEBI" id="CHEBI:16947"/>
    </reaction>
</comment>
<comment type="catalytic activity">
    <reaction evidence="7">
        <text>L-aspartate(out) = L-aspartate(in)</text>
        <dbReference type="Rhea" id="RHEA:66332"/>
        <dbReference type="ChEBI" id="CHEBI:29991"/>
    </reaction>
</comment>
<comment type="catalytic activity">
    <reaction evidence="7">
        <text>L-glutamate(out) = L-glutamate(in)</text>
        <dbReference type="Rhea" id="RHEA:66336"/>
        <dbReference type="ChEBI" id="CHEBI:29985"/>
    </reaction>
</comment>
<comment type="catalytic activity">
    <reaction evidence="5 6">
        <text>H(+)(in) = H(+)(out)</text>
        <dbReference type="Rhea" id="RHEA:34979"/>
        <dbReference type="ChEBI" id="CHEBI:15378"/>
    </reaction>
</comment>
<comment type="catalytic activity">
    <reaction evidence="5 6">
        <text>chloride(in) = chloride(out)</text>
        <dbReference type="Rhea" id="RHEA:29823"/>
        <dbReference type="ChEBI" id="CHEBI:17996"/>
    </reaction>
</comment>
<comment type="activity regulation">
    <text evidence="5 6 7">Increased activity at pH lower than 8.0 (PubMed:31356773). sulfate/sulfate exchange activity is inhibited strongly by pyridoxal 5'-phosphate, bathophenanthroline and the organic mercurials mersalyl, p-chloromercuribenzoate and HgCl2 (PubMed:31356773). Proton conductance is activated by cardiolipin and long-chain free fatty acids and inhibited by purine nucleotides ATP and ADP. Chloride ion transporter activity is inhibited by long-chain free fatty acids.</text>
</comment>
<comment type="biophysicochemical properties">
    <kinetics>
        <KM evidence="7">1.2 mM for sulfate</KM>
        <KM evidence="7">1.3 mM for thiosulfate</KM>
        <Vmax evidence="7">4.7 mmol/min/g protein toward sulfate</Vmax>
    </kinetics>
</comment>
<comment type="subunit">
    <text evidence="6">Homotetramer.</text>
</comment>
<comment type="subcellular location">
    <subcellularLocation>
        <location evidence="11">Mitochondrion inner membrane</location>
        <topology evidence="2">Multi-pass membrane protein</topology>
    </subcellularLocation>
</comment>
<comment type="alternative products">
    <event type="alternative splicing"/>
    <isoform>
        <id>O95258-1</id>
        <name>1</name>
        <name>UCP5L</name>
        <sequence type="displayed"/>
    </isoform>
    <isoform>
        <id>O95258-2</id>
        <name>2</name>
        <name>UCP5S</name>
        <sequence type="described" ref="VSP_003272"/>
    </isoform>
    <isoform>
        <id>O95258-3</id>
        <name>3</name>
        <name>UCP5SI</name>
        <sequence type="described" ref="VSP_003272 VSP_003273"/>
    </isoform>
</comment>
<comment type="tissue specificity">
    <text evidence="3">Mainly expressed in brain (PubMed:10928996). Some expression in testis and pituitary (PubMed:10928996).</text>
</comment>
<comment type="similarity">
    <text evidence="10">Belongs to the mitochondrial carrier (TC 2.A.29) family.</text>
</comment>
<sequence length="325" mass="36202">MGIFPGIILIFLRVKFATAAVIVSGHQKSTTVSHEMSGLNWKPFVYGGLASIVAEFGTFPVDLTKTRLQVQGQSIDARFKEIKYRGMFHALFRICKEEGVLALYSGIAPALLRQASYGTIKIGIYQSLKRLFVERLEDETLLINMICGVVSGVISSTIANPTDVLKIRMQAQGSLFQGSMIGSFIDIYQQEGTRGLWRGVVPTAQRAAIVVGVELPVYDITKKHLILSGMMGDTILTHFVSSFTCGLAGALASNPVDVVRTRMMNQRAIVGHVDLYKGTVDGILKMWKHEGFFALYKGFWPNWLRLGPWNIIFFITYEQLKRLQI</sequence>
<gene>
    <name evidence="13" type="primary">SLC25A14</name>
    <name evidence="9" type="synonym">BMCP1</name>
    <name evidence="8" type="synonym">UCP5</name>
    <name type="ORF">UNQ791/PRO1682</name>
</gene>
<feature type="chain" id="PRO_0000090677" description="Brain mitochondrial carrier protein 1">
    <location>
        <begin position="1"/>
        <end position="325"/>
    </location>
</feature>
<feature type="transmembrane region" description="Helical; Name=1" evidence="2">
    <location>
        <begin position="38"/>
        <end position="54"/>
    </location>
</feature>
<feature type="transmembrane region" description="Helical; Name=2" evidence="2">
    <location>
        <begin position="112"/>
        <end position="128"/>
    </location>
</feature>
<feature type="transmembrane region" description="Helical; Name=3" evidence="2">
    <location>
        <begin position="141"/>
        <end position="161"/>
    </location>
</feature>
<feature type="transmembrane region" description="Helical; Name=4" evidence="2">
    <location>
        <begin position="199"/>
        <end position="215"/>
    </location>
</feature>
<feature type="transmembrane region" description="Helical; Name=5" evidence="2">
    <location>
        <begin position="240"/>
        <end position="256"/>
    </location>
</feature>
<feature type="transmembrane region" description="Helical; Name=6" evidence="2">
    <location>
        <begin position="298"/>
        <end position="315"/>
    </location>
</feature>
<feature type="repeat" description="Solcar 1">
    <location>
        <begin position="42"/>
        <end position="131"/>
    </location>
</feature>
<feature type="repeat" description="Solcar 2">
    <location>
        <begin position="139"/>
        <end position="224"/>
    </location>
</feature>
<feature type="repeat" description="Solcar 3">
    <location>
        <begin position="233"/>
        <end position="323"/>
    </location>
</feature>
<feature type="splice variant" id="VSP_003272" description="In isoform 2 and isoform 3." evidence="10">
    <location>
        <begin position="23"/>
        <end position="25"/>
    </location>
</feature>
<feature type="splice variant" id="VSP_003273" description="In isoform 3." evidence="10">
    <original>R</original>
    <variation>RCLCSKAVTGCVLWLMPVIPALWEANAGGSLE</variation>
    <location>
        <position position="198"/>
    </location>
</feature>
<feature type="sequence variant" id="VAR_050138" description="In dbSNP:rs2143598.">
    <original>E</original>
    <variation>A</variation>
    <location>
        <position position="55"/>
    </location>
</feature>
<organism>
    <name type="scientific">Homo sapiens</name>
    <name type="common">Human</name>
    <dbReference type="NCBI Taxonomy" id="9606"/>
    <lineage>
        <taxon>Eukaryota</taxon>
        <taxon>Metazoa</taxon>
        <taxon>Chordata</taxon>
        <taxon>Craniata</taxon>
        <taxon>Vertebrata</taxon>
        <taxon>Euteleostomi</taxon>
        <taxon>Mammalia</taxon>
        <taxon>Eutheria</taxon>
        <taxon>Euarchontoglires</taxon>
        <taxon>Primates</taxon>
        <taxon>Haplorrhini</taxon>
        <taxon>Catarrhini</taxon>
        <taxon>Hominidae</taxon>
        <taxon>Homo</taxon>
    </lineage>
</organism>
<reference key="1">
    <citation type="journal article" date="1998" name="J. Biol. Chem.">
        <title>BMCP1, a novel mitochondrial carrier with high expression in the central nervous system of humans and rodents, and respiration uncoupling activity in recombinant yeast.</title>
        <authorList>
            <person name="Sanchis D."/>
            <person name="Fleury C."/>
            <person name="Chomiki N."/>
            <person name="Goubern M."/>
            <person name="Huang Q."/>
            <person name="Neverova M."/>
            <person name="Gregoire F."/>
            <person name="Easlick J."/>
            <person name="Raimbault S."/>
            <person name="Levi-Meyrueis C."/>
            <person name="Miroux B."/>
            <person name="Collins S."/>
            <person name="Seldin M."/>
            <person name="Richard D."/>
            <person name="Warden C."/>
            <person name="Bouillaud F."/>
            <person name="Ricquier D."/>
        </authorList>
    </citation>
    <scope>NUCLEOTIDE SEQUENCE [MRNA] (ISOFORM 1)</scope>
</reference>
<reference key="2">
    <citation type="journal article" date="2000" name="FASEB J.">
        <title>Characterization of novel UCP5/BMCP1 isoforms and differential regulation of UCP4 and UCP5 expression through dietary or temperature manipulation.</title>
        <authorList>
            <person name="Yu X.X."/>
            <person name="Mao W."/>
            <person name="Zhong A."/>
            <person name="Schow P."/>
            <person name="Brush J."/>
            <person name="Sherwood S.W."/>
            <person name="Adams S.H."/>
            <person name="Pan G."/>
        </authorList>
    </citation>
    <scope>NUCLEOTIDE SEQUENCE [MRNA]</scope>
    <scope>ALTERNATIVE SPLICING</scope>
    <scope>TISSUE SPECIFICITY</scope>
</reference>
<reference key="3">
    <citation type="journal article" date="2003" name="Genome Res.">
        <title>The secreted protein discovery initiative (SPDI), a large-scale effort to identify novel human secreted and transmembrane proteins: a bioinformatics assessment.</title>
        <authorList>
            <person name="Clark H.F."/>
            <person name="Gurney A.L."/>
            <person name="Abaya E."/>
            <person name="Baker K."/>
            <person name="Baldwin D.T."/>
            <person name="Brush J."/>
            <person name="Chen J."/>
            <person name="Chow B."/>
            <person name="Chui C."/>
            <person name="Crowley C."/>
            <person name="Currell B."/>
            <person name="Deuel B."/>
            <person name="Dowd P."/>
            <person name="Eaton D."/>
            <person name="Foster J.S."/>
            <person name="Grimaldi C."/>
            <person name="Gu Q."/>
            <person name="Hass P.E."/>
            <person name="Heldens S."/>
            <person name="Huang A."/>
            <person name="Kim H.S."/>
            <person name="Klimowski L."/>
            <person name="Jin Y."/>
            <person name="Johnson S."/>
            <person name="Lee J."/>
            <person name="Lewis L."/>
            <person name="Liao D."/>
            <person name="Mark M.R."/>
            <person name="Robbie E."/>
            <person name="Sanchez C."/>
            <person name="Schoenfeld J."/>
            <person name="Seshagiri S."/>
            <person name="Simmons L."/>
            <person name="Singh J."/>
            <person name="Smith V."/>
            <person name="Stinson J."/>
            <person name="Vagts A."/>
            <person name="Vandlen R.L."/>
            <person name="Watanabe C."/>
            <person name="Wieand D."/>
            <person name="Woods K."/>
            <person name="Xie M.-H."/>
            <person name="Yansura D.G."/>
            <person name="Yi S."/>
            <person name="Yu G."/>
            <person name="Yuan J."/>
            <person name="Zhang M."/>
            <person name="Zhang Z."/>
            <person name="Goddard A.D."/>
            <person name="Wood W.I."/>
            <person name="Godowski P.J."/>
            <person name="Gray A.M."/>
        </authorList>
    </citation>
    <scope>NUCLEOTIDE SEQUENCE [LARGE SCALE MRNA] (ISOFORM 1)</scope>
</reference>
<reference key="4">
    <citation type="journal article" date="2005" name="Nature">
        <title>The DNA sequence of the human X chromosome.</title>
        <authorList>
            <person name="Ross M.T."/>
            <person name="Grafham D.V."/>
            <person name="Coffey A.J."/>
            <person name="Scherer S."/>
            <person name="McLay K."/>
            <person name="Muzny D."/>
            <person name="Platzer M."/>
            <person name="Howell G.R."/>
            <person name="Burrows C."/>
            <person name="Bird C.P."/>
            <person name="Frankish A."/>
            <person name="Lovell F.L."/>
            <person name="Howe K.L."/>
            <person name="Ashurst J.L."/>
            <person name="Fulton R.S."/>
            <person name="Sudbrak R."/>
            <person name="Wen G."/>
            <person name="Jones M.C."/>
            <person name="Hurles M.E."/>
            <person name="Andrews T.D."/>
            <person name="Scott C.E."/>
            <person name="Searle S."/>
            <person name="Ramser J."/>
            <person name="Whittaker A."/>
            <person name="Deadman R."/>
            <person name="Carter N.P."/>
            <person name="Hunt S.E."/>
            <person name="Chen R."/>
            <person name="Cree A."/>
            <person name="Gunaratne P."/>
            <person name="Havlak P."/>
            <person name="Hodgson A."/>
            <person name="Metzker M.L."/>
            <person name="Richards S."/>
            <person name="Scott G."/>
            <person name="Steffen D."/>
            <person name="Sodergren E."/>
            <person name="Wheeler D.A."/>
            <person name="Worley K.C."/>
            <person name="Ainscough R."/>
            <person name="Ambrose K.D."/>
            <person name="Ansari-Lari M.A."/>
            <person name="Aradhya S."/>
            <person name="Ashwell R.I."/>
            <person name="Babbage A.K."/>
            <person name="Bagguley C.L."/>
            <person name="Ballabio A."/>
            <person name="Banerjee R."/>
            <person name="Barker G.E."/>
            <person name="Barlow K.F."/>
            <person name="Barrett I.P."/>
            <person name="Bates K.N."/>
            <person name="Beare D.M."/>
            <person name="Beasley H."/>
            <person name="Beasley O."/>
            <person name="Beck A."/>
            <person name="Bethel G."/>
            <person name="Blechschmidt K."/>
            <person name="Brady N."/>
            <person name="Bray-Allen S."/>
            <person name="Bridgeman A.M."/>
            <person name="Brown A.J."/>
            <person name="Brown M.J."/>
            <person name="Bonnin D."/>
            <person name="Bruford E.A."/>
            <person name="Buhay C."/>
            <person name="Burch P."/>
            <person name="Burford D."/>
            <person name="Burgess J."/>
            <person name="Burrill W."/>
            <person name="Burton J."/>
            <person name="Bye J.M."/>
            <person name="Carder C."/>
            <person name="Carrel L."/>
            <person name="Chako J."/>
            <person name="Chapman J.C."/>
            <person name="Chavez D."/>
            <person name="Chen E."/>
            <person name="Chen G."/>
            <person name="Chen Y."/>
            <person name="Chen Z."/>
            <person name="Chinault C."/>
            <person name="Ciccodicola A."/>
            <person name="Clark S.Y."/>
            <person name="Clarke G."/>
            <person name="Clee C.M."/>
            <person name="Clegg S."/>
            <person name="Clerc-Blankenburg K."/>
            <person name="Clifford K."/>
            <person name="Cobley V."/>
            <person name="Cole C.G."/>
            <person name="Conquer J.S."/>
            <person name="Corby N."/>
            <person name="Connor R.E."/>
            <person name="David R."/>
            <person name="Davies J."/>
            <person name="Davis C."/>
            <person name="Davis J."/>
            <person name="Delgado O."/>
            <person name="Deshazo D."/>
            <person name="Dhami P."/>
            <person name="Ding Y."/>
            <person name="Dinh H."/>
            <person name="Dodsworth S."/>
            <person name="Draper H."/>
            <person name="Dugan-Rocha S."/>
            <person name="Dunham A."/>
            <person name="Dunn M."/>
            <person name="Durbin K.J."/>
            <person name="Dutta I."/>
            <person name="Eades T."/>
            <person name="Ellwood M."/>
            <person name="Emery-Cohen A."/>
            <person name="Errington H."/>
            <person name="Evans K.L."/>
            <person name="Faulkner L."/>
            <person name="Francis F."/>
            <person name="Frankland J."/>
            <person name="Fraser A.E."/>
            <person name="Galgoczy P."/>
            <person name="Gilbert J."/>
            <person name="Gill R."/>
            <person name="Gloeckner G."/>
            <person name="Gregory S.G."/>
            <person name="Gribble S."/>
            <person name="Griffiths C."/>
            <person name="Grocock R."/>
            <person name="Gu Y."/>
            <person name="Gwilliam R."/>
            <person name="Hamilton C."/>
            <person name="Hart E.A."/>
            <person name="Hawes A."/>
            <person name="Heath P.D."/>
            <person name="Heitmann K."/>
            <person name="Hennig S."/>
            <person name="Hernandez J."/>
            <person name="Hinzmann B."/>
            <person name="Ho S."/>
            <person name="Hoffs M."/>
            <person name="Howden P.J."/>
            <person name="Huckle E.J."/>
            <person name="Hume J."/>
            <person name="Hunt P.J."/>
            <person name="Hunt A.R."/>
            <person name="Isherwood J."/>
            <person name="Jacob L."/>
            <person name="Johnson D."/>
            <person name="Jones S."/>
            <person name="de Jong P.J."/>
            <person name="Joseph S.S."/>
            <person name="Keenan S."/>
            <person name="Kelly S."/>
            <person name="Kershaw J.K."/>
            <person name="Khan Z."/>
            <person name="Kioschis P."/>
            <person name="Klages S."/>
            <person name="Knights A.J."/>
            <person name="Kosiura A."/>
            <person name="Kovar-Smith C."/>
            <person name="Laird G.K."/>
            <person name="Langford C."/>
            <person name="Lawlor S."/>
            <person name="Leversha M."/>
            <person name="Lewis L."/>
            <person name="Liu W."/>
            <person name="Lloyd C."/>
            <person name="Lloyd D.M."/>
            <person name="Loulseged H."/>
            <person name="Loveland J.E."/>
            <person name="Lovell J.D."/>
            <person name="Lozado R."/>
            <person name="Lu J."/>
            <person name="Lyne R."/>
            <person name="Ma J."/>
            <person name="Maheshwari M."/>
            <person name="Matthews L.H."/>
            <person name="McDowall J."/>
            <person name="McLaren S."/>
            <person name="McMurray A."/>
            <person name="Meidl P."/>
            <person name="Meitinger T."/>
            <person name="Milne S."/>
            <person name="Miner G."/>
            <person name="Mistry S.L."/>
            <person name="Morgan M."/>
            <person name="Morris S."/>
            <person name="Mueller I."/>
            <person name="Mullikin J.C."/>
            <person name="Nguyen N."/>
            <person name="Nordsiek G."/>
            <person name="Nyakatura G."/>
            <person name="O'dell C.N."/>
            <person name="Okwuonu G."/>
            <person name="Palmer S."/>
            <person name="Pandian R."/>
            <person name="Parker D."/>
            <person name="Parrish J."/>
            <person name="Pasternak S."/>
            <person name="Patel D."/>
            <person name="Pearce A.V."/>
            <person name="Pearson D.M."/>
            <person name="Pelan S.E."/>
            <person name="Perez L."/>
            <person name="Porter K.M."/>
            <person name="Ramsey Y."/>
            <person name="Reichwald K."/>
            <person name="Rhodes S."/>
            <person name="Ridler K.A."/>
            <person name="Schlessinger D."/>
            <person name="Schueler M.G."/>
            <person name="Sehra H.K."/>
            <person name="Shaw-Smith C."/>
            <person name="Shen H."/>
            <person name="Sheridan E.M."/>
            <person name="Shownkeen R."/>
            <person name="Skuce C.D."/>
            <person name="Smith M.L."/>
            <person name="Sotheran E.C."/>
            <person name="Steingruber H.E."/>
            <person name="Steward C.A."/>
            <person name="Storey R."/>
            <person name="Swann R.M."/>
            <person name="Swarbreck D."/>
            <person name="Tabor P.E."/>
            <person name="Taudien S."/>
            <person name="Taylor T."/>
            <person name="Teague B."/>
            <person name="Thomas K."/>
            <person name="Thorpe A."/>
            <person name="Timms K."/>
            <person name="Tracey A."/>
            <person name="Trevanion S."/>
            <person name="Tromans A.C."/>
            <person name="d'Urso M."/>
            <person name="Verduzco D."/>
            <person name="Villasana D."/>
            <person name="Waldron L."/>
            <person name="Wall M."/>
            <person name="Wang Q."/>
            <person name="Warren J."/>
            <person name="Warry G.L."/>
            <person name="Wei X."/>
            <person name="West A."/>
            <person name="Whitehead S.L."/>
            <person name="Whiteley M.N."/>
            <person name="Wilkinson J.E."/>
            <person name="Willey D.L."/>
            <person name="Williams G."/>
            <person name="Williams L."/>
            <person name="Williamson A."/>
            <person name="Williamson H."/>
            <person name="Wilming L."/>
            <person name="Woodmansey R.L."/>
            <person name="Wray P.W."/>
            <person name="Yen J."/>
            <person name="Zhang J."/>
            <person name="Zhou J."/>
            <person name="Zoghbi H."/>
            <person name="Zorilla S."/>
            <person name="Buck D."/>
            <person name="Reinhardt R."/>
            <person name="Poustka A."/>
            <person name="Rosenthal A."/>
            <person name="Lehrach H."/>
            <person name="Meindl A."/>
            <person name="Minx P.J."/>
            <person name="Hillier L.W."/>
            <person name="Willard H.F."/>
            <person name="Wilson R.K."/>
            <person name="Waterston R.H."/>
            <person name="Rice C.M."/>
            <person name="Vaudin M."/>
            <person name="Coulson A."/>
            <person name="Nelson D.L."/>
            <person name="Weinstock G."/>
            <person name="Sulston J.E."/>
            <person name="Durbin R.M."/>
            <person name="Hubbard T."/>
            <person name="Gibbs R.A."/>
            <person name="Beck S."/>
            <person name="Rogers J."/>
            <person name="Bentley D.R."/>
        </authorList>
    </citation>
    <scope>NUCLEOTIDE SEQUENCE [LARGE SCALE GENOMIC DNA]</scope>
</reference>
<reference key="5">
    <citation type="submission" date="2005-09" db="EMBL/GenBank/DDBJ databases">
        <authorList>
            <person name="Mural R.J."/>
            <person name="Istrail S."/>
            <person name="Sutton G.G."/>
            <person name="Florea L."/>
            <person name="Halpern A.L."/>
            <person name="Mobarry C.M."/>
            <person name="Lippert R."/>
            <person name="Walenz B."/>
            <person name="Shatkay H."/>
            <person name="Dew I."/>
            <person name="Miller J.R."/>
            <person name="Flanigan M.J."/>
            <person name="Edwards N.J."/>
            <person name="Bolanos R."/>
            <person name="Fasulo D."/>
            <person name="Halldorsson B.V."/>
            <person name="Hannenhalli S."/>
            <person name="Turner R."/>
            <person name="Yooseph S."/>
            <person name="Lu F."/>
            <person name="Nusskern D.R."/>
            <person name="Shue B.C."/>
            <person name="Zheng X.H."/>
            <person name="Zhong F."/>
            <person name="Delcher A.L."/>
            <person name="Huson D.H."/>
            <person name="Kravitz S.A."/>
            <person name="Mouchard L."/>
            <person name="Reinert K."/>
            <person name="Remington K.A."/>
            <person name="Clark A.G."/>
            <person name="Waterman M.S."/>
            <person name="Eichler E.E."/>
            <person name="Adams M.D."/>
            <person name="Hunkapiller M.W."/>
            <person name="Myers E.W."/>
            <person name="Venter J.C."/>
        </authorList>
    </citation>
    <scope>NUCLEOTIDE SEQUENCE [LARGE SCALE GENOMIC DNA]</scope>
</reference>
<reference key="6">
    <citation type="journal article" date="2004" name="Genome Res.">
        <title>The status, quality, and expansion of the NIH full-length cDNA project: the Mammalian Gene Collection (MGC).</title>
        <authorList>
            <consortium name="The MGC Project Team"/>
        </authorList>
    </citation>
    <scope>NUCLEOTIDE SEQUENCE [LARGE SCALE MRNA] (ISOFORM 1)</scope>
</reference>
<reference key="7">
    <citation type="journal article" date="2010" name="Free Radic. Biol. Med.">
        <title>Mitochondrial UCP5 is neuroprotective by preserving mitochondrial membrane potential, ATP levels, and reducing oxidative stress in MPP+ and dopamine toxicity.</title>
        <authorList>
            <person name="Kwok K.H."/>
            <person name="Ho P.W."/>
            <person name="Chu A.C."/>
            <person name="Ho J.W."/>
            <person name="Liu H.F."/>
            <person name="Yiu D.C."/>
            <person name="Chan K.H."/>
            <person name="Kung M.H."/>
            <person name="Ramsden D.B."/>
            <person name="Ho S.L."/>
        </authorList>
    </citation>
    <scope>FUNCTION</scope>
    <scope>SUBCELLULAR LOCATION</scope>
</reference>
<reference key="8">
    <citation type="journal article" date="2012" name="Biochemistry">
        <title>Toward understanding the mechanism of ion transport activity of neuronal uncoupling proteins UCP2, UCP4, and UCP5.</title>
        <authorList>
            <person name="Hoang T."/>
            <person name="Smith M.D."/>
            <person name="Jelokhani-Niaraki M."/>
        </authorList>
    </citation>
    <scope>FUNCTION</scope>
    <scope>TRANSPORTER ACTIVITY</scope>
    <scope>ACTIVITY REGULATION</scope>
</reference>
<reference key="9">
    <citation type="journal article" date="2015" name="Biosci. Rep.">
        <title>A biophysical study on molecular physiology of the uncoupling proteins of the central nervous system.</title>
        <authorList>
            <person name="Hoang T."/>
            <person name="Kuljanin M."/>
            <person name="Smith M.D."/>
            <person name="Jelokhani-Niaraki M."/>
        </authorList>
    </citation>
    <scope>FUNCTION</scope>
    <scope>TRANSPORTER ACTIVITY</scope>
    <scope>ACTIVITY REGULATION</scope>
    <scope>SUBUNIT</scope>
</reference>
<reference key="10">
    <citation type="journal article" date="2019" name="Biochim. Biophys. Acta">
        <title>The human uncoupling proteins 5 and 6 (UCP5/SLC25A14 and UCP6/SLC25A30) transport sulfur oxyanions, phosphate and dicarboxylates.</title>
        <authorList>
            <person name="Gorgoglione R."/>
            <person name="Porcelli V."/>
            <person name="Santoro A."/>
            <person name="Daddabbo L."/>
            <person name="Vozza A."/>
            <person name="Monne M."/>
            <person name="Di Noia M.A."/>
            <person name="Palmieri L."/>
            <person name="Fiermonte G."/>
            <person name="Palmieri F."/>
        </authorList>
    </citation>
    <scope>FUNCTION</scope>
    <scope>TRANSPORTER ACTIVITY</scope>
    <scope>ACTIVITY REGULATION</scope>
    <scope>BIOPHYSICOCHEMICAL PROPERTIES</scope>
    <scope>IDENTIFICATION BY MASS SPECTROMETRY</scope>
</reference>
<accession>O95258</accession>
<accession>D3DTG2</accession>
<accession>Q0VDH7</accession>
<accession>Q9HC60</accession>
<accession>Q9HC61</accession>